<keyword id="KW-0002">3D-structure</keyword>
<keyword id="KW-0997">Cell inner membrane</keyword>
<keyword id="KW-1003">Cell membrane</keyword>
<keyword id="KW-0175">Coiled coil</keyword>
<keyword id="KW-0963">Cytoplasm</keyword>
<keyword id="KW-0472">Membrane</keyword>
<keyword id="KW-1185">Reference proteome</keyword>
<gene>
    <name type="primary">hflD</name>
    <name type="synonym">ycfC</name>
    <name type="ordered locus">b1132</name>
    <name type="ordered locus">JW5165</name>
</gene>
<feature type="chain" id="PRO_0000071576" description="High frequency lysogenization protein HflD">
    <location>
        <begin position="1"/>
        <end position="213"/>
    </location>
</feature>
<feature type="coiled-coil region" evidence="1">
    <location>
        <begin position="79"/>
        <end position="126"/>
    </location>
</feature>
<feature type="helix" evidence="4">
    <location>
        <begin position="5"/>
        <end position="28"/>
    </location>
</feature>
<feature type="helix" evidence="4">
    <location>
        <begin position="33"/>
        <end position="44"/>
    </location>
</feature>
<feature type="helix" evidence="4">
    <location>
        <begin position="51"/>
        <end position="54"/>
    </location>
</feature>
<feature type="helix" evidence="4">
    <location>
        <begin position="59"/>
        <end position="62"/>
    </location>
</feature>
<feature type="helix" evidence="4">
    <location>
        <begin position="63"/>
        <end position="74"/>
    </location>
</feature>
<feature type="strand" evidence="4">
    <location>
        <begin position="78"/>
        <end position="80"/>
    </location>
</feature>
<feature type="helix" evidence="4">
    <location>
        <begin position="81"/>
        <end position="101"/>
    </location>
</feature>
<feature type="helix" evidence="4">
    <location>
        <begin position="105"/>
        <end position="114"/>
    </location>
</feature>
<feature type="helix" evidence="4">
    <location>
        <begin position="117"/>
        <end position="120"/>
    </location>
</feature>
<feature type="helix" evidence="4">
    <location>
        <begin position="128"/>
        <end position="141"/>
    </location>
</feature>
<feature type="helix" evidence="4">
    <location>
        <begin position="143"/>
        <end position="145"/>
    </location>
</feature>
<feature type="helix" evidence="4">
    <location>
        <begin position="155"/>
        <end position="158"/>
    </location>
</feature>
<feature type="helix" evidence="4">
    <location>
        <begin position="161"/>
        <end position="183"/>
    </location>
</feature>
<feature type="helix" evidence="4">
    <location>
        <begin position="188"/>
        <end position="208"/>
    </location>
</feature>
<protein>
    <recommendedName>
        <fullName>High frequency lysogenization protein HflD</fullName>
    </recommendedName>
</protein>
<name>HFLD_ECOLI</name>
<dbReference type="EMBL" id="X59307">
    <property type="protein sequence ID" value="CAA41995.1"/>
    <property type="molecule type" value="Genomic_DNA"/>
</dbReference>
<dbReference type="EMBL" id="M74924">
    <property type="status" value="NOT_ANNOTATED_CDS"/>
    <property type="molecule type" value="Genomic_DNA"/>
</dbReference>
<dbReference type="EMBL" id="U00096">
    <property type="protein sequence ID" value="AAC74216.1"/>
    <property type="molecule type" value="Genomic_DNA"/>
</dbReference>
<dbReference type="EMBL" id="AP009048">
    <property type="protein sequence ID" value="BAA35954.1"/>
    <property type="molecule type" value="Genomic_DNA"/>
</dbReference>
<dbReference type="PIR" id="S19211">
    <property type="entry name" value="S19211"/>
</dbReference>
<dbReference type="RefSeq" id="NP_415650.1">
    <property type="nucleotide sequence ID" value="NC_000913.3"/>
</dbReference>
<dbReference type="RefSeq" id="WP_001297479.1">
    <property type="nucleotide sequence ID" value="NZ_STEB01000016.1"/>
</dbReference>
<dbReference type="PDB" id="1QZ4">
    <property type="method" value="X-ray"/>
    <property type="resolution" value="2.00 A"/>
    <property type="chains" value="A=2-213"/>
</dbReference>
<dbReference type="PDB" id="1SDI">
    <property type="method" value="X-ray"/>
    <property type="resolution" value="1.65 A"/>
    <property type="chains" value="A=2-213"/>
</dbReference>
<dbReference type="PDBsum" id="1QZ4"/>
<dbReference type="PDBsum" id="1SDI"/>
<dbReference type="SMR" id="P25746"/>
<dbReference type="BioGRID" id="4263130">
    <property type="interactions" value="20"/>
</dbReference>
<dbReference type="FunCoup" id="P25746">
    <property type="interactions" value="107"/>
</dbReference>
<dbReference type="STRING" id="511145.b1132"/>
<dbReference type="jPOST" id="P25746"/>
<dbReference type="PaxDb" id="511145-b1132"/>
<dbReference type="EnsemblBacteria" id="AAC74216">
    <property type="protein sequence ID" value="AAC74216"/>
    <property type="gene ID" value="b1132"/>
</dbReference>
<dbReference type="GeneID" id="93776278"/>
<dbReference type="GeneID" id="945693"/>
<dbReference type="KEGG" id="ecj:JW5165"/>
<dbReference type="KEGG" id="eco:b1132"/>
<dbReference type="KEGG" id="ecoc:C3026_06810"/>
<dbReference type="PATRIC" id="fig|1411691.4.peg.1134"/>
<dbReference type="EchoBASE" id="EB1321"/>
<dbReference type="eggNOG" id="COG2915">
    <property type="taxonomic scope" value="Bacteria"/>
</dbReference>
<dbReference type="HOGENOM" id="CLU_098920_0_0_6"/>
<dbReference type="InParanoid" id="P25746"/>
<dbReference type="OMA" id="RYIISLM"/>
<dbReference type="OrthoDB" id="9788031at2"/>
<dbReference type="PhylomeDB" id="P25746"/>
<dbReference type="BioCyc" id="EcoCyc:EG11345-MONOMER"/>
<dbReference type="EvolutionaryTrace" id="P25746"/>
<dbReference type="PRO" id="PR:P25746"/>
<dbReference type="Proteomes" id="UP000000625">
    <property type="component" value="Chromosome"/>
</dbReference>
<dbReference type="GO" id="GO:0005737">
    <property type="term" value="C:cytoplasm"/>
    <property type="evidence" value="ECO:0007669"/>
    <property type="project" value="UniProtKB-SubCell"/>
</dbReference>
<dbReference type="GO" id="GO:0005886">
    <property type="term" value="C:plasma membrane"/>
    <property type="evidence" value="ECO:0000314"/>
    <property type="project" value="EcoCyc"/>
</dbReference>
<dbReference type="GO" id="GO:0009408">
    <property type="term" value="P:response to heat"/>
    <property type="evidence" value="ECO:0000270"/>
    <property type="project" value="EcoliWiki"/>
</dbReference>
<dbReference type="FunFam" id="1.10.3890.10:FF:000001">
    <property type="entry name" value="High frequency lysogenization protein HflD homolog"/>
    <property type="match status" value="1"/>
</dbReference>
<dbReference type="Gene3D" id="1.10.3890.10">
    <property type="entry name" value="HflD-like"/>
    <property type="match status" value="1"/>
</dbReference>
<dbReference type="HAMAP" id="MF_00695">
    <property type="entry name" value="HflD_protein"/>
    <property type="match status" value="1"/>
</dbReference>
<dbReference type="InterPro" id="IPR007451">
    <property type="entry name" value="HflD"/>
</dbReference>
<dbReference type="InterPro" id="IPR035932">
    <property type="entry name" value="HflD-like_sf"/>
</dbReference>
<dbReference type="NCBIfam" id="NF001245">
    <property type="entry name" value="PRK00218.1-1"/>
    <property type="match status" value="1"/>
</dbReference>
<dbReference type="NCBIfam" id="NF001246">
    <property type="entry name" value="PRK00218.1-2"/>
    <property type="match status" value="1"/>
</dbReference>
<dbReference type="NCBIfam" id="NF001248">
    <property type="entry name" value="PRK00218.1-4"/>
    <property type="match status" value="1"/>
</dbReference>
<dbReference type="NCBIfam" id="NF001249">
    <property type="entry name" value="PRK00218.1-5"/>
    <property type="match status" value="1"/>
</dbReference>
<dbReference type="PANTHER" id="PTHR38100">
    <property type="entry name" value="HIGH FREQUENCY LYSOGENIZATION PROTEIN HFLD"/>
    <property type="match status" value="1"/>
</dbReference>
<dbReference type="PANTHER" id="PTHR38100:SF1">
    <property type="entry name" value="HIGH FREQUENCY LYSOGENIZATION PROTEIN HFLD"/>
    <property type="match status" value="1"/>
</dbReference>
<dbReference type="Pfam" id="PF04356">
    <property type="entry name" value="DUF489"/>
    <property type="match status" value="1"/>
</dbReference>
<dbReference type="SUPFAM" id="SSF101322">
    <property type="entry name" value="YcfC-like"/>
    <property type="match status" value="1"/>
</dbReference>
<accession>P25746</accession>
<proteinExistence type="evidence at protein level"/>
<evidence type="ECO:0000255" key="1"/>
<evidence type="ECO:0000269" key="2">
    <source>
    </source>
</evidence>
<evidence type="ECO:0000305" key="3"/>
<evidence type="ECO:0007829" key="4">
    <source>
        <dbReference type="PDB" id="1SDI"/>
    </source>
</evidence>
<reference key="1">
    <citation type="journal article" date="1996" name="Microbiology">
        <title>The purB gene of Escherichia coli K-12 is located in an operon.</title>
        <authorList>
            <person name="Green S.M."/>
            <person name="Malik T."/>
            <person name="Giles I.G."/>
            <person name="Drabble W.T."/>
        </authorList>
    </citation>
    <scope>NUCLEOTIDE SEQUENCE [GENOMIC DNA]</scope>
    <source>
        <strain>K12</strain>
    </source>
</reference>
<reference key="2">
    <citation type="journal article" date="1992" name="J. Bacteriol.">
        <title>Escherichia coli purB gene: cloning, nucleotide sequence, and regulation by purR.</title>
        <authorList>
            <person name="He B."/>
            <person name="Smith J.M."/>
            <person name="Zalkin H."/>
        </authorList>
    </citation>
    <scope>NUCLEOTIDE SEQUENCE [GENOMIC DNA]</scope>
    <source>
        <strain>K12</strain>
    </source>
</reference>
<reference key="3">
    <citation type="journal article" date="1996" name="DNA Res.">
        <title>A 718-kb DNA sequence of the Escherichia coli K-12 genome corresponding to the 12.7-28.0 min region on the linkage map.</title>
        <authorList>
            <person name="Oshima T."/>
            <person name="Aiba H."/>
            <person name="Baba T."/>
            <person name="Fujita K."/>
            <person name="Hayashi K."/>
            <person name="Honjo A."/>
            <person name="Ikemoto K."/>
            <person name="Inada T."/>
            <person name="Itoh T."/>
            <person name="Kajihara M."/>
            <person name="Kanai K."/>
            <person name="Kashimoto K."/>
            <person name="Kimura S."/>
            <person name="Kitagawa M."/>
            <person name="Makino K."/>
            <person name="Masuda S."/>
            <person name="Miki T."/>
            <person name="Mizobuchi K."/>
            <person name="Mori H."/>
            <person name="Motomura K."/>
            <person name="Nakamura Y."/>
            <person name="Nashimoto H."/>
            <person name="Nishio Y."/>
            <person name="Saito N."/>
            <person name="Sampei G."/>
            <person name="Seki Y."/>
            <person name="Tagami H."/>
            <person name="Takemoto K."/>
            <person name="Wada C."/>
            <person name="Yamamoto Y."/>
            <person name="Yano M."/>
            <person name="Horiuchi T."/>
        </authorList>
    </citation>
    <scope>NUCLEOTIDE SEQUENCE [LARGE SCALE GENOMIC DNA]</scope>
    <source>
        <strain>K12 / W3110 / ATCC 27325 / DSM 5911</strain>
    </source>
</reference>
<reference key="4">
    <citation type="journal article" date="1997" name="Science">
        <title>The complete genome sequence of Escherichia coli K-12.</title>
        <authorList>
            <person name="Blattner F.R."/>
            <person name="Plunkett G. III"/>
            <person name="Bloch C.A."/>
            <person name="Perna N.T."/>
            <person name="Burland V."/>
            <person name="Riley M."/>
            <person name="Collado-Vides J."/>
            <person name="Glasner J.D."/>
            <person name="Rode C.K."/>
            <person name="Mayhew G.F."/>
            <person name="Gregor J."/>
            <person name="Davis N.W."/>
            <person name="Kirkpatrick H.A."/>
            <person name="Goeden M.A."/>
            <person name="Rose D.J."/>
            <person name="Mau B."/>
            <person name="Shao Y."/>
        </authorList>
    </citation>
    <scope>NUCLEOTIDE SEQUENCE [LARGE SCALE GENOMIC DNA]</scope>
    <source>
        <strain>K12 / MG1655 / ATCC 47076</strain>
    </source>
</reference>
<reference key="5">
    <citation type="journal article" date="2006" name="Mol. Syst. Biol.">
        <title>Highly accurate genome sequences of Escherichia coli K-12 strains MG1655 and W3110.</title>
        <authorList>
            <person name="Hayashi K."/>
            <person name="Morooka N."/>
            <person name="Yamamoto Y."/>
            <person name="Fujita K."/>
            <person name="Isono K."/>
            <person name="Choi S."/>
            <person name="Ohtsubo E."/>
            <person name="Baba T."/>
            <person name="Wanner B.L."/>
            <person name="Mori H."/>
            <person name="Horiuchi T."/>
        </authorList>
    </citation>
    <scope>NUCLEOTIDE SEQUENCE [LARGE SCALE GENOMIC DNA]</scope>
    <source>
        <strain>K12 / W3110 / ATCC 27325 / DSM 5911</strain>
    </source>
</reference>
<reference key="6">
    <citation type="journal article" date="2001" name="J. Biol. Chem.">
        <title>Revisiting the lysogenization control of bacteriophage lambda. Identification and characterization of a new host component, HflD.</title>
        <authorList>
            <person name="Kihara A."/>
            <person name="Akiyama Y."/>
            <person name="Ito K."/>
        </authorList>
    </citation>
    <scope>FUNCTION</scope>
    <scope>SUBUNIT</scope>
    <scope>INTERACTION WITH CII</scope>
    <scope>SUBCELLULAR LOCATION</scope>
    <scope>DISRUPTION PHENOTYPE</scope>
</reference>
<reference key="7">
    <citation type="submission" date="2009-02" db="PDB data bank">
        <title>Structure of a hypothetical protein ycfC coded by Escherichia coli genome.</title>
        <authorList>
            <consortium name="Midwest center for structural genomics (MCSG)"/>
        </authorList>
    </citation>
    <scope>X-RAY CRYSTALLOGRAPHY (1.65 ANGSTROMS) OF 2-213</scope>
</reference>
<sequence length="213" mass="22948">MAKNYYDITLALAGICQSARLVQQLAHQGHCDADALHVSLNSIIDMNPSSTLAVFGGSEANLRVGLETLLGVLNASSRQGLNAELTRYTLSLMVLERKLSSAKGALDTLGNRINGLQRQLEHFDLQSETLMSAMAAIYVDVISPLGPRIQVTGSPAVLQSPQVQAKVRATLLAGIRAAVLWHQVGGGRLQLMFSRNRLTTQAKQILAHLTPEL</sequence>
<organism>
    <name type="scientific">Escherichia coli (strain K12)</name>
    <dbReference type="NCBI Taxonomy" id="83333"/>
    <lineage>
        <taxon>Bacteria</taxon>
        <taxon>Pseudomonadati</taxon>
        <taxon>Pseudomonadota</taxon>
        <taxon>Gammaproteobacteria</taxon>
        <taxon>Enterobacterales</taxon>
        <taxon>Enterobacteriaceae</taxon>
        <taxon>Escherichia</taxon>
    </lineage>
</organism>
<comment type="function">
    <text evidence="2">Negative regulator of phage lambda lysogenization. Contributes to the degradation of the phage regulatory protein CII. Acts probably by holding CII on the membrane surface, away from the target promoters, but close to the FtsH protease.</text>
</comment>
<comment type="subunit">
    <text evidence="2">Interacts with CII protein from phage lambda.</text>
</comment>
<comment type="subcellular location">
    <subcellularLocation>
        <location evidence="2">Cytoplasm</location>
    </subcellularLocation>
    <subcellularLocation>
        <location evidence="2">Cell inner membrane</location>
        <topology evidence="2">Peripheral membrane protein</topology>
        <orientation evidence="2">Cytoplasmic side</orientation>
    </subcellularLocation>
</comment>
<comment type="disruption phenotype">
    <text evidence="2">Cells lacking this gene show an increased lysogenization frequency.</text>
</comment>
<comment type="similarity">
    <text evidence="3">Belongs to the HflD family.</text>
</comment>
<comment type="sequence caution" evidence="3">
    <conflict type="frameshift">
        <sequence resource="EMBL" id="M74924"/>
    </conflict>
</comment>